<organism>
    <name type="scientific">Staphylococcus aureus (strain Mu3 / ATCC 700698)</name>
    <dbReference type="NCBI Taxonomy" id="418127"/>
    <lineage>
        <taxon>Bacteria</taxon>
        <taxon>Bacillati</taxon>
        <taxon>Bacillota</taxon>
        <taxon>Bacilli</taxon>
        <taxon>Bacillales</taxon>
        <taxon>Staphylococcaceae</taxon>
        <taxon>Staphylococcus</taxon>
    </lineage>
</organism>
<gene>
    <name evidence="1" type="primary">mraZ</name>
    <name type="ordered locus">SAHV_1168</name>
</gene>
<keyword id="KW-0963">Cytoplasm</keyword>
<keyword id="KW-0238">DNA-binding</keyword>
<keyword id="KW-0677">Repeat</keyword>
<keyword id="KW-0804">Transcription</keyword>
<keyword id="KW-0805">Transcription regulation</keyword>
<proteinExistence type="inferred from homology"/>
<evidence type="ECO:0000255" key="1">
    <source>
        <dbReference type="HAMAP-Rule" id="MF_01008"/>
    </source>
</evidence>
<evidence type="ECO:0000255" key="2">
    <source>
        <dbReference type="PROSITE-ProRule" id="PRU01076"/>
    </source>
</evidence>
<dbReference type="EMBL" id="AP009324">
    <property type="protein sequence ID" value="BAF78051.1"/>
    <property type="molecule type" value="Genomic_DNA"/>
</dbReference>
<dbReference type="RefSeq" id="WP_000480800.1">
    <property type="nucleotide sequence ID" value="NZ_CTYB01000010.1"/>
</dbReference>
<dbReference type="SMR" id="A7X1B6"/>
<dbReference type="GeneID" id="66839371"/>
<dbReference type="KEGG" id="saw:SAHV_1168"/>
<dbReference type="HOGENOM" id="CLU_107907_0_5_9"/>
<dbReference type="GO" id="GO:0005737">
    <property type="term" value="C:cytoplasm"/>
    <property type="evidence" value="ECO:0007669"/>
    <property type="project" value="UniProtKB-UniRule"/>
</dbReference>
<dbReference type="GO" id="GO:0009295">
    <property type="term" value="C:nucleoid"/>
    <property type="evidence" value="ECO:0007669"/>
    <property type="project" value="UniProtKB-SubCell"/>
</dbReference>
<dbReference type="GO" id="GO:0003700">
    <property type="term" value="F:DNA-binding transcription factor activity"/>
    <property type="evidence" value="ECO:0007669"/>
    <property type="project" value="UniProtKB-UniRule"/>
</dbReference>
<dbReference type="GO" id="GO:0000976">
    <property type="term" value="F:transcription cis-regulatory region binding"/>
    <property type="evidence" value="ECO:0007669"/>
    <property type="project" value="TreeGrafter"/>
</dbReference>
<dbReference type="GO" id="GO:2000143">
    <property type="term" value="P:negative regulation of DNA-templated transcription initiation"/>
    <property type="evidence" value="ECO:0007669"/>
    <property type="project" value="TreeGrafter"/>
</dbReference>
<dbReference type="CDD" id="cd16321">
    <property type="entry name" value="MraZ_C"/>
    <property type="match status" value="1"/>
</dbReference>
<dbReference type="CDD" id="cd16320">
    <property type="entry name" value="MraZ_N"/>
    <property type="match status" value="1"/>
</dbReference>
<dbReference type="FunFam" id="3.40.1550.20:FF:000002">
    <property type="entry name" value="Transcriptional regulator MraZ"/>
    <property type="match status" value="1"/>
</dbReference>
<dbReference type="Gene3D" id="3.40.1550.20">
    <property type="entry name" value="Transcriptional regulator MraZ domain"/>
    <property type="match status" value="1"/>
</dbReference>
<dbReference type="HAMAP" id="MF_01008">
    <property type="entry name" value="MraZ"/>
    <property type="match status" value="1"/>
</dbReference>
<dbReference type="InterPro" id="IPR003444">
    <property type="entry name" value="MraZ"/>
</dbReference>
<dbReference type="InterPro" id="IPR035644">
    <property type="entry name" value="MraZ_C"/>
</dbReference>
<dbReference type="InterPro" id="IPR020603">
    <property type="entry name" value="MraZ_dom"/>
</dbReference>
<dbReference type="InterPro" id="IPR035642">
    <property type="entry name" value="MraZ_N"/>
</dbReference>
<dbReference type="InterPro" id="IPR038619">
    <property type="entry name" value="MraZ_sf"/>
</dbReference>
<dbReference type="InterPro" id="IPR007159">
    <property type="entry name" value="SpoVT-AbrB_dom"/>
</dbReference>
<dbReference type="InterPro" id="IPR037914">
    <property type="entry name" value="SpoVT-AbrB_sf"/>
</dbReference>
<dbReference type="NCBIfam" id="TIGR00242">
    <property type="entry name" value="division/cell wall cluster transcriptional repressor MraZ"/>
    <property type="match status" value="1"/>
</dbReference>
<dbReference type="PANTHER" id="PTHR34701">
    <property type="entry name" value="TRANSCRIPTIONAL REGULATOR MRAZ"/>
    <property type="match status" value="1"/>
</dbReference>
<dbReference type="PANTHER" id="PTHR34701:SF1">
    <property type="entry name" value="TRANSCRIPTIONAL REGULATOR MRAZ"/>
    <property type="match status" value="1"/>
</dbReference>
<dbReference type="Pfam" id="PF02381">
    <property type="entry name" value="MraZ"/>
    <property type="match status" value="2"/>
</dbReference>
<dbReference type="SUPFAM" id="SSF89447">
    <property type="entry name" value="AbrB/MazE/MraZ-like"/>
    <property type="match status" value="1"/>
</dbReference>
<dbReference type="PROSITE" id="PS51740">
    <property type="entry name" value="SPOVT_ABRB"/>
    <property type="match status" value="2"/>
</dbReference>
<protein>
    <recommendedName>
        <fullName>Transcriptional regulator MraZ</fullName>
    </recommendedName>
</protein>
<name>MRAZ_STAA1</name>
<reference key="1">
    <citation type="journal article" date="2008" name="Antimicrob. Agents Chemother.">
        <title>Mutated response regulator graR is responsible for phenotypic conversion of Staphylococcus aureus from heterogeneous vancomycin-intermediate resistance to vancomycin-intermediate resistance.</title>
        <authorList>
            <person name="Neoh H.-M."/>
            <person name="Cui L."/>
            <person name="Yuzawa H."/>
            <person name="Takeuchi F."/>
            <person name="Matsuo M."/>
            <person name="Hiramatsu K."/>
        </authorList>
    </citation>
    <scope>NUCLEOTIDE SEQUENCE [LARGE SCALE GENOMIC DNA]</scope>
    <source>
        <strain>Mu3 / ATCC 700698</strain>
    </source>
</reference>
<feature type="chain" id="PRO_1000062942" description="Transcriptional regulator MraZ">
    <location>
        <begin position="1"/>
        <end position="143"/>
    </location>
</feature>
<feature type="domain" description="SpoVT-AbrB 1" evidence="2">
    <location>
        <begin position="5"/>
        <end position="47"/>
    </location>
</feature>
<feature type="domain" description="SpoVT-AbrB 2" evidence="2">
    <location>
        <begin position="76"/>
        <end position="119"/>
    </location>
</feature>
<comment type="subunit">
    <text evidence="1">Forms oligomers.</text>
</comment>
<comment type="subcellular location">
    <subcellularLocation>
        <location evidence="1">Cytoplasm</location>
        <location evidence="1">Nucleoid</location>
    </subcellularLocation>
</comment>
<comment type="similarity">
    <text evidence="1">Belongs to the MraZ family.</text>
</comment>
<sequence>MFMGEYDHQLDTKGRMIIPSKFRYDLNERFIITRGLDKCLFGYTLDEWQQIEEKMKTLPMTKKDARKFMRMFFSGAVEVELDKQGRINIPQNLRKYANLTKECTVIGVSNRIEIWDRETWNDFYEESEESFEDIAEDLIDFDF</sequence>
<accession>A7X1B6</accession>